<accession>E3SXU5</accession>
<sequence>MTAPTPENGCNKLQNMLQAAVQSVQWTYSLFWQICPQQLILVWGDGYYNGAIKTRKTVQPMEVSAEEASLQRSQQLRELYESLSAGETNPPTRRPCASLSPEDLTESEWFYLMCVSFSFPPGVGLPGKAYARRQHVWLTGANEVDSKTFSRAILAKSANIQTVVCIPVLDGVVEIGTTDKVQEDLNFIKHVRSFFIDHHSLPPKPALSEHSTSNPTYSTDHIPAIMYTVADPASTTIPNQDDMDEDEEEDDEDDEVESGSEDETNQGHNQHATSIIEAAEPSELMQIEMPDDIRIGSPNDGSNNLDSDFHLLAVSNQGNPSRQIDSYTTERWGPIEEPLDDSLQVQLSSSDKSYFIIH</sequence>
<reference key="1">
    <citation type="journal article" date="2010" name="PLoS ONE">
        <title>Identification of Mendel's white flower character.</title>
        <authorList>
            <person name="Hellens R.P."/>
            <person name="Moreau C."/>
            <person name="Lin-Wang K."/>
            <person name="Schwinn K.E."/>
            <person name="Thomson S.J."/>
            <person name="Fiers M.W."/>
            <person name="Frew T.J."/>
            <person name="Murray S.R."/>
            <person name="Hofer J.M."/>
            <person name="Jacobs J.M."/>
            <person name="Davies K.M."/>
            <person name="Allan A.C."/>
            <person name="Bendahmane A."/>
            <person name="Coyne C.J."/>
            <person name="Timmerman-Vaughan G.M."/>
            <person name="Ellis T.H."/>
        </authorList>
    </citation>
    <scope>NUCLEOTIDE SEQUENCE [GENOMIC DNA]</scope>
    <scope>FUNCTION</scope>
    <source>
        <strain>cv. Cameor</strain>
    </source>
</reference>
<organism>
    <name type="scientific">Pisum sativum</name>
    <name type="common">Garden pea</name>
    <name type="synonym">Lathyrus oleraceus</name>
    <dbReference type="NCBI Taxonomy" id="3888"/>
    <lineage>
        <taxon>Eukaryota</taxon>
        <taxon>Viridiplantae</taxon>
        <taxon>Streptophyta</taxon>
        <taxon>Embryophyta</taxon>
        <taxon>Tracheophyta</taxon>
        <taxon>Spermatophyta</taxon>
        <taxon>Magnoliopsida</taxon>
        <taxon>eudicotyledons</taxon>
        <taxon>Gunneridae</taxon>
        <taxon>Pentapetalae</taxon>
        <taxon>rosids</taxon>
        <taxon>fabids</taxon>
        <taxon>Fabales</taxon>
        <taxon>Fabaceae</taxon>
        <taxon>Papilionoideae</taxon>
        <taxon>50 kb inversion clade</taxon>
        <taxon>NPAAA clade</taxon>
        <taxon>Hologalegina</taxon>
        <taxon>IRL clade</taxon>
        <taxon>Fabeae</taxon>
        <taxon>Pisum</taxon>
    </lineage>
</organism>
<keyword id="KW-0010">Activator</keyword>
<keyword id="KW-0284">Flavonoid biosynthesis</keyword>
<keyword id="KW-0804">Transcription</keyword>
<keyword id="KW-0805">Transcription regulation</keyword>
<gene>
    <name type="primary">BHLH</name>
</gene>
<dbReference type="EMBL" id="GU132942">
    <property type="protein sequence ID" value="ADO13283.1"/>
    <property type="molecule type" value="Genomic_DNA"/>
</dbReference>
<dbReference type="SMR" id="E3SXU5"/>
<dbReference type="GO" id="GO:0009813">
    <property type="term" value="P:flavonoid biosynthetic process"/>
    <property type="evidence" value="ECO:0007669"/>
    <property type="project" value="UniProtKB-KW"/>
</dbReference>
<dbReference type="InterPro" id="IPR025610">
    <property type="entry name" value="MYC/MYB_N"/>
</dbReference>
<dbReference type="PANTHER" id="PTHR46266">
    <property type="entry name" value="TRANSCRIPTION FACTOR TT8"/>
    <property type="match status" value="1"/>
</dbReference>
<dbReference type="PANTHER" id="PTHR46266:SF4">
    <property type="entry name" value="TRANSCRIPTION FACTOR TT8"/>
    <property type="match status" value="1"/>
</dbReference>
<dbReference type="Pfam" id="PF14215">
    <property type="entry name" value="bHLH-MYC_N"/>
    <property type="match status" value="1"/>
</dbReference>
<name>BHLHM_PEA</name>
<comment type="function">
    <text evidence="2">Non-functional truncated transcription activator.</text>
</comment>
<comment type="miscellaneous">
    <text evidence="3">Corresponds to one of the seven genes studied by Gregor Mendel in 1866. The wild type purple flowers (A allele) have a functional BHLH protein (AC E3SXU4) (PubMed:20949001).</text>
</comment>
<comment type="similarity">
    <text>Belongs to the bHLH protein family.</text>
</comment>
<evidence type="ECO:0000256" key="1">
    <source>
        <dbReference type="SAM" id="MobiDB-lite"/>
    </source>
</evidence>
<evidence type="ECO:0000269" key="2">
    <source>
    </source>
</evidence>
<evidence type="ECO:0000305" key="3">
    <source>
    </source>
</evidence>
<feature type="chain" id="PRO_0000425241" description="Truncated basic helix-loop-helix protein A">
    <location>
        <begin position="1"/>
        <end position="358"/>
    </location>
</feature>
<feature type="region of interest" description="Disordered" evidence="1">
    <location>
        <begin position="230"/>
        <end position="271"/>
    </location>
</feature>
<feature type="compositionally biased region" description="Acidic residues" evidence="1">
    <location>
        <begin position="241"/>
        <end position="264"/>
    </location>
</feature>
<proteinExistence type="inferred from homology"/>
<protein>
    <recommendedName>
        <fullName>Truncated basic helix-loop-helix protein A</fullName>
    </recommendedName>
</protein>